<keyword id="KW-0067">ATP-binding</keyword>
<keyword id="KW-0436">Ligase</keyword>
<keyword id="KW-0547">Nucleotide-binding</keyword>
<keyword id="KW-0648">Protein biosynthesis</keyword>
<keyword id="KW-1185">Reference proteome</keyword>
<proteinExistence type="inferred from homology"/>
<reference key="1">
    <citation type="journal article" date="2004" name="Science">
        <title>A predator unmasked: life cycle of Bdellovibrio bacteriovorus from a genomic perspective.</title>
        <authorList>
            <person name="Rendulic S."/>
            <person name="Jagtap P."/>
            <person name="Rosinus A."/>
            <person name="Eppinger M."/>
            <person name="Baar C."/>
            <person name="Lanz C."/>
            <person name="Keller H."/>
            <person name="Lambert C."/>
            <person name="Evans K.J."/>
            <person name="Goesmann A."/>
            <person name="Meyer F."/>
            <person name="Sockett R.E."/>
            <person name="Schuster S.C."/>
        </authorList>
    </citation>
    <scope>NUCLEOTIDE SEQUENCE [LARGE SCALE GENOMIC DNA]</scope>
    <source>
        <strain>ATCC 15356 / DSM 50701 / NCIMB 9529 / HD100</strain>
    </source>
</reference>
<name>GATA_BDEBA</name>
<accession>Q6MRL7</accession>
<comment type="function">
    <text evidence="1">Allows the formation of correctly charged Gln-tRNA(Gln) through the transamidation of misacylated Glu-tRNA(Gln) in organisms which lack glutaminyl-tRNA synthetase. The reaction takes place in the presence of glutamine and ATP through an activated gamma-phospho-Glu-tRNA(Gln).</text>
</comment>
<comment type="catalytic activity">
    <reaction evidence="1">
        <text>L-glutamyl-tRNA(Gln) + L-glutamine + ATP + H2O = L-glutaminyl-tRNA(Gln) + L-glutamate + ADP + phosphate + H(+)</text>
        <dbReference type="Rhea" id="RHEA:17521"/>
        <dbReference type="Rhea" id="RHEA-COMP:9681"/>
        <dbReference type="Rhea" id="RHEA-COMP:9684"/>
        <dbReference type="ChEBI" id="CHEBI:15377"/>
        <dbReference type="ChEBI" id="CHEBI:15378"/>
        <dbReference type="ChEBI" id="CHEBI:29985"/>
        <dbReference type="ChEBI" id="CHEBI:30616"/>
        <dbReference type="ChEBI" id="CHEBI:43474"/>
        <dbReference type="ChEBI" id="CHEBI:58359"/>
        <dbReference type="ChEBI" id="CHEBI:78520"/>
        <dbReference type="ChEBI" id="CHEBI:78521"/>
        <dbReference type="ChEBI" id="CHEBI:456216"/>
        <dbReference type="EC" id="6.3.5.7"/>
    </reaction>
</comment>
<comment type="subunit">
    <text evidence="1">Heterotrimer of A, B and C subunits.</text>
</comment>
<comment type="similarity">
    <text evidence="1">Belongs to the amidase family. GatA subfamily.</text>
</comment>
<organism>
    <name type="scientific">Bdellovibrio bacteriovorus (strain ATCC 15356 / DSM 50701 / NCIMB 9529 / HD100)</name>
    <dbReference type="NCBI Taxonomy" id="264462"/>
    <lineage>
        <taxon>Bacteria</taxon>
        <taxon>Pseudomonadati</taxon>
        <taxon>Bdellovibrionota</taxon>
        <taxon>Bdellovibrionia</taxon>
        <taxon>Bdellovibrionales</taxon>
        <taxon>Pseudobdellovibrionaceae</taxon>
        <taxon>Bdellovibrio</taxon>
    </lineage>
</organism>
<gene>
    <name evidence="1" type="primary">gatA</name>
    <name type="ordered locus">Bd0059</name>
</gene>
<feature type="chain" id="PRO_0000241075" description="Glutamyl-tRNA(Gln) amidotransferase subunit A">
    <location>
        <begin position="1"/>
        <end position="490"/>
    </location>
</feature>
<feature type="active site" description="Charge relay system" evidence="1">
    <location>
        <position position="78"/>
    </location>
</feature>
<feature type="active site" description="Charge relay system" evidence="1">
    <location>
        <position position="153"/>
    </location>
</feature>
<feature type="active site" description="Acyl-ester intermediate" evidence="1">
    <location>
        <position position="177"/>
    </location>
</feature>
<evidence type="ECO:0000255" key="1">
    <source>
        <dbReference type="HAMAP-Rule" id="MF_00120"/>
    </source>
</evidence>
<sequence length="490" mass="52535">MDLTFASLSEISEAVNNRSISAKEVTLHFLKRIENLNPKLNAFTSLNPQAVQEAEAVDARIANGEDVGLLAGVPFGIKEMFCTKGLTTTAGSKILENFVPPYDATAVARLKKSGIVVMGKLNQDEFAMGSSNETSFHGVVKNPWDLERVPGGSSGGSAAAQASRLVAGTLGTDTGGSIRQPASFCGIVGVKPTYGRVSRYGIVAYASSLDQAGPMVSSVRDAALTLEVISGFDPQDSTTTQKQVPAWSQNLKADVKGMKIGLMKEYMTGALDPDVQKTVENSVDTLKQLGAEIVEVSVPMTAFAVPVYYLVAASEASSNLSRYDGVKYGYRAEFKNLSAVDLEEFYSQTRGQAFGAEVKRRIMLGTYCLSSGYYDAFYNKAGQVRRLIMEQYLEAFKKCDVILSPVTTAPAFKIGERVSDPLAMYLNDIFTTSTNLAGLPGMSVPFGQSQSGLPIGIQLTAGHFEEQKMLNVAFALEGASLVKGKHPHVI</sequence>
<dbReference type="EC" id="6.3.5.7" evidence="1"/>
<dbReference type="EMBL" id="BX842646">
    <property type="protein sequence ID" value="CAE77740.1"/>
    <property type="molecule type" value="Genomic_DNA"/>
</dbReference>
<dbReference type="RefSeq" id="WP_011162681.1">
    <property type="nucleotide sequence ID" value="NC_005363.1"/>
</dbReference>
<dbReference type="SMR" id="Q6MRL7"/>
<dbReference type="STRING" id="264462.Bd0059"/>
<dbReference type="GeneID" id="93011211"/>
<dbReference type="KEGG" id="bba:Bd0059"/>
<dbReference type="eggNOG" id="COG0154">
    <property type="taxonomic scope" value="Bacteria"/>
</dbReference>
<dbReference type="HOGENOM" id="CLU_009600_0_3_7"/>
<dbReference type="Proteomes" id="UP000008080">
    <property type="component" value="Chromosome"/>
</dbReference>
<dbReference type="GO" id="GO:0030956">
    <property type="term" value="C:glutamyl-tRNA(Gln) amidotransferase complex"/>
    <property type="evidence" value="ECO:0007669"/>
    <property type="project" value="InterPro"/>
</dbReference>
<dbReference type="GO" id="GO:0005524">
    <property type="term" value="F:ATP binding"/>
    <property type="evidence" value="ECO:0007669"/>
    <property type="project" value="UniProtKB-KW"/>
</dbReference>
<dbReference type="GO" id="GO:0050567">
    <property type="term" value="F:glutaminyl-tRNA synthase (glutamine-hydrolyzing) activity"/>
    <property type="evidence" value="ECO:0007669"/>
    <property type="project" value="UniProtKB-UniRule"/>
</dbReference>
<dbReference type="GO" id="GO:0006412">
    <property type="term" value="P:translation"/>
    <property type="evidence" value="ECO:0007669"/>
    <property type="project" value="UniProtKB-UniRule"/>
</dbReference>
<dbReference type="Gene3D" id="3.90.1300.10">
    <property type="entry name" value="Amidase signature (AS) domain"/>
    <property type="match status" value="1"/>
</dbReference>
<dbReference type="HAMAP" id="MF_00120">
    <property type="entry name" value="GatA"/>
    <property type="match status" value="1"/>
</dbReference>
<dbReference type="InterPro" id="IPR000120">
    <property type="entry name" value="Amidase"/>
</dbReference>
<dbReference type="InterPro" id="IPR023631">
    <property type="entry name" value="Amidase_dom"/>
</dbReference>
<dbReference type="InterPro" id="IPR036928">
    <property type="entry name" value="AS_sf"/>
</dbReference>
<dbReference type="InterPro" id="IPR004412">
    <property type="entry name" value="GatA"/>
</dbReference>
<dbReference type="NCBIfam" id="TIGR00132">
    <property type="entry name" value="gatA"/>
    <property type="match status" value="1"/>
</dbReference>
<dbReference type="PANTHER" id="PTHR11895:SF151">
    <property type="entry name" value="GLUTAMYL-TRNA(GLN) AMIDOTRANSFERASE SUBUNIT A"/>
    <property type="match status" value="1"/>
</dbReference>
<dbReference type="PANTHER" id="PTHR11895">
    <property type="entry name" value="TRANSAMIDASE"/>
    <property type="match status" value="1"/>
</dbReference>
<dbReference type="Pfam" id="PF01425">
    <property type="entry name" value="Amidase"/>
    <property type="match status" value="1"/>
</dbReference>
<dbReference type="SUPFAM" id="SSF75304">
    <property type="entry name" value="Amidase signature (AS) enzymes"/>
    <property type="match status" value="1"/>
</dbReference>
<protein>
    <recommendedName>
        <fullName evidence="1">Glutamyl-tRNA(Gln) amidotransferase subunit A</fullName>
        <shortName evidence="1">Glu-ADT subunit A</shortName>
        <ecNumber evidence="1">6.3.5.7</ecNumber>
    </recommendedName>
</protein>